<dbReference type="EC" id="2.7.1.30" evidence="1"/>
<dbReference type="EMBL" id="CU458896">
    <property type="protein sequence ID" value="CAM60481.1"/>
    <property type="molecule type" value="Genomic_DNA"/>
</dbReference>
<dbReference type="RefSeq" id="WP_012296300.1">
    <property type="nucleotide sequence ID" value="NZ_MLCG01000005.1"/>
</dbReference>
<dbReference type="SMR" id="B1MFT1"/>
<dbReference type="GeneID" id="93377325"/>
<dbReference type="KEGG" id="mab:MAB_0382"/>
<dbReference type="UniPathway" id="UPA00618">
    <property type="reaction ID" value="UER00672"/>
</dbReference>
<dbReference type="Proteomes" id="UP000007137">
    <property type="component" value="Chromosome"/>
</dbReference>
<dbReference type="GO" id="GO:0005829">
    <property type="term" value="C:cytosol"/>
    <property type="evidence" value="ECO:0007669"/>
    <property type="project" value="TreeGrafter"/>
</dbReference>
<dbReference type="GO" id="GO:0005524">
    <property type="term" value="F:ATP binding"/>
    <property type="evidence" value="ECO:0007669"/>
    <property type="project" value="UniProtKB-UniRule"/>
</dbReference>
<dbReference type="GO" id="GO:0004370">
    <property type="term" value="F:glycerol kinase activity"/>
    <property type="evidence" value="ECO:0000250"/>
    <property type="project" value="UniProtKB"/>
</dbReference>
<dbReference type="GO" id="GO:0019563">
    <property type="term" value="P:glycerol catabolic process"/>
    <property type="evidence" value="ECO:0007669"/>
    <property type="project" value="UniProtKB-UniRule"/>
</dbReference>
<dbReference type="GO" id="GO:0006071">
    <property type="term" value="P:glycerol metabolic process"/>
    <property type="evidence" value="ECO:0000250"/>
    <property type="project" value="UniProtKB"/>
</dbReference>
<dbReference type="GO" id="GO:0006072">
    <property type="term" value="P:glycerol-3-phosphate metabolic process"/>
    <property type="evidence" value="ECO:0007669"/>
    <property type="project" value="InterPro"/>
</dbReference>
<dbReference type="CDD" id="cd07769">
    <property type="entry name" value="ASKHA_NBD_FGGY_GK"/>
    <property type="match status" value="1"/>
</dbReference>
<dbReference type="FunFam" id="3.30.420.40:FF:000007">
    <property type="entry name" value="Glycerol kinase"/>
    <property type="match status" value="1"/>
</dbReference>
<dbReference type="FunFam" id="3.30.420.40:FF:000008">
    <property type="entry name" value="Glycerol kinase"/>
    <property type="match status" value="1"/>
</dbReference>
<dbReference type="Gene3D" id="3.30.420.40">
    <property type="match status" value="2"/>
</dbReference>
<dbReference type="HAMAP" id="MF_00186">
    <property type="entry name" value="Glycerol_kin"/>
    <property type="match status" value="1"/>
</dbReference>
<dbReference type="InterPro" id="IPR043129">
    <property type="entry name" value="ATPase_NBD"/>
</dbReference>
<dbReference type="InterPro" id="IPR000577">
    <property type="entry name" value="Carb_kinase_FGGY"/>
</dbReference>
<dbReference type="InterPro" id="IPR018483">
    <property type="entry name" value="Carb_kinase_FGGY_CS"/>
</dbReference>
<dbReference type="InterPro" id="IPR018485">
    <property type="entry name" value="FGGY_C"/>
</dbReference>
<dbReference type="InterPro" id="IPR018484">
    <property type="entry name" value="FGGY_N"/>
</dbReference>
<dbReference type="InterPro" id="IPR005999">
    <property type="entry name" value="Glycerol_kin"/>
</dbReference>
<dbReference type="NCBIfam" id="TIGR01311">
    <property type="entry name" value="glycerol_kin"/>
    <property type="match status" value="1"/>
</dbReference>
<dbReference type="NCBIfam" id="NF000756">
    <property type="entry name" value="PRK00047.1"/>
    <property type="match status" value="1"/>
</dbReference>
<dbReference type="PANTHER" id="PTHR10196:SF69">
    <property type="entry name" value="GLYCEROL KINASE"/>
    <property type="match status" value="1"/>
</dbReference>
<dbReference type="PANTHER" id="PTHR10196">
    <property type="entry name" value="SUGAR KINASE"/>
    <property type="match status" value="1"/>
</dbReference>
<dbReference type="Pfam" id="PF02782">
    <property type="entry name" value="FGGY_C"/>
    <property type="match status" value="1"/>
</dbReference>
<dbReference type="Pfam" id="PF00370">
    <property type="entry name" value="FGGY_N"/>
    <property type="match status" value="1"/>
</dbReference>
<dbReference type="PIRSF" id="PIRSF000538">
    <property type="entry name" value="GlpK"/>
    <property type="match status" value="1"/>
</dbReference>
<dbReference type="SUPFAM" id="SSF53067">
    <property type="entry name" value="Actin-like ATPase domain"/>
    <property type="match status" value="2"/>
</dbReference>
<dbReference type="PROSITE" id="PS00933">
    <property type="entry name" value="FGGY_KINASES_1"/>
    <property type="match status" value="1"/>
</dbReference>
<dbReference type="PROSITE" id="PS00445">
    <property type="entry name" value="FGGY_KINASES_2"/>
    <property type="match status" value="1"/>
</dbReference>
<reference key="1">
    <citation type="journal article" date="2009" name="PLoS ONE">
        <title>Non mycobacterial virulence genes in the genome of the emerging pathogen Mycobacterium abscessus.</title>
        <authorList>
            <person name="Ripoll F."/>
            <person name="Pasek S."/>
            <person name="Schenowitz C."/>
            <person name="Dossat C."/>
            <person name="Barbe V."/>
            <person name="Rottman M."/>
            <person name="Macheras E."/>
            <person name="Heym B."/>
            <person name="Herrmann J.L."/>
            <person name="Daffe M."/>
            <person name="Brosch R."/>
            <person name="Risler J.L."/>
            <person name="Gaillard J.L."/>
        </authorList>
    </citation>
    <scope>NUCLEOTIDE SEQUENCE [LARGE SCALE GENOMIC DNA]</scope>
    <source>
        <strain>ATCC 19977 / DSM 44196 / CCUG 20993 / CIP 104536 / JCM 13569 / NCTC 13031 / TMC 1543 / L948</strain>
    </source>
</reference>
<gene>
    <name evidence="1" type="primary">glpK</name>
    <name type="ordered locus">MAB_0382</name>
</gene>
<evidence type="ECO:0000255" key="1">
    <source>
        <dbReference type="HAMAP-Rule" id="MF_00186"/>
    </source>
</evidence>
<protein>
    <recommendedName>
        <fullName evidence="1">Glycerol kinase</fullName>
        <ecNumber evidence="1">2.7.1.30</ecNumber>
    </recommendedName>
    <alternativeName>
        <fullName evidence="1">ATP:glycerol 3-phosphotransferase</fullName>
    </alternativeName>
    <alternativeName>
        <fullName evidence="1">Glycerokinase</fullName>
        <shortName evidence="1">GK</shortName>
    </alternativeName>
</protein>
<keyword id="KW-0067">ATP-binding</keyword>
<keyword id="KW-0319">Glycerol metabolism</keyword>
<keyword id="KW-0418">Kinase</keyword>
<keyword id="KW-0547">Nucleotide-binding</keyword>
<keyword id="KW-1185">Reference proteome</keyword>
<keyword id="KW-0808">Transferase</keyword>
<organism>
    <name type="scientific">Mycobacteroides abscessus (strain ATCC 19977 / DSM 44196 / CCUG 20993 / CIP 104536 / JCM 13569 / NCTC 13031 / TMC 1543 / L948)</name>
    <name type="common">Mycobacterium abscessus</name>
    <dbReference type="NCBI Taxonomy" id="561007"/>
    <lineage>
        <taxon>Bacteria</taxon>
        <taxon>Bacillati</taxon>
        <taxon>Actinomycetota</taxon>
        <taxon>Actinomycetes</taxon>
        <taxon>Mycobacteriales</taxon>
        <taxon>Mycobacteriaceae</taxon>
        <taxon>Mycobacteroides</taxon>
        <taxon>Mycobacteroides abscessus</taxon>
    </lineage>
</organism>
<accession>B1MFT1</accession>
<comment type="function">
    <text evidence="1">Key enzyme in the regulation of glycerol uptake and metabolism. Catalyzes the phosphorylation of glycerol to yield sn-glycerol 3-phosphate.</text>
</comment>
<comment type="catalytic activity">
    <reaction evidence="1">
        <text>glycerol + ATP = sn-glycerol 3-phosphate + ADP + H(+)</text>
        <dbReference type="Rhea" id="RHEA:21644"/>
        <dbReference type="ChEBI" id="CHEBI:15378"/>
        <dbReference type="ChEBI" id="CHEBI:17754"/>
        <dbReference type="ChEBI" id="CHEBI:30616"/>
        <dbReference type="ChEBI" id="CHEBI:57597"/>
        <dbReference type="ChEBI" id="CHEBI:456216"/>
        <dbReference type="EC" id="2.7.1.30"/>
    </reaction>
</comment>
<comment type="activity regulation">
    <text evidence="1">Inhibited by fructose 1,6-bisphosphate (FBP).</text>
</comment>
<comment type="pathway">
    <text evidence="1">Polyol metabolism; glycerol degradation via glycerol kinase pathway; sn-glycerol 3-phosphate from glycerol: step 1/1.</text>
</comment>
<comment type="similarity">
    <text evidence="1">Belongs to the FGGY kinase family.</text>
</comment>
<sequence>MADFVASIDQGTTSTRAMIFNHRGEEVGRHQLEHQQLLPRAGWVEHNPVEIWERTWSVLATSLNVTGLSAGDLAAVGVTNQRETTLVWNRHTGRPYCNAIVWQDTRTDKIAAALDRDGRGDIIRRKAGLPPATYFSGGKLQWILENVEGVRRDAENGDALFGTPDSWVIWNLTGGVRSGVHVTDVTNASRTMLMNLETLDWDDELLSFFSIPRQMLPPIKASSPVEPFGFTTQLGPLGGEVPIAGDLGDQQAAMVGQVCLNPGEAKNTYGTGNFLLLNTGEELVHSSNGLLTTVCYQFGDNKPVYALEGSIAVTGSAVQWLRDQLGIISGASQSEDLARQVEDNGGVYFVPAFSGLFAPYWRSDARGAIVGLSRFNTNAHLARATLEAICYQSREVVEAMEADSGVRMEVLKVDGGITANKLCMQIQADTLGVDVVKPVVAETTALGAAYAAGLAVGFWKDADDLRRNWQEDERWSSSITDEKRAEGFAGWKKAVQRTLDGVDV</sequence>
<name>GLPK_MYCA9</name>
<proteinExistence type="inferred from homology"/>
<feature type="chain" id="PRO_1000098746" description="Glycerol kinase">
    <location>
        <begin position="1"/>
        <end position="504"/>
    </location>
</feature>
<feature type="binding site" evidence="1">
    <location>
        <position position="12"/>
    </location>
    <ligand>
        <name>ADP</name>
        <dbReference type="ChEBI" id="CHEBI:456216"/>
    </ligand>
</feature>
<feature type="binding site" evidence="1">
    <location>
        <position position="12"/>
    </location>
    <ligand>
        <name>ATP</name>
        <dbReference type="ChEBI" id="CHEBI:30616"/>
    </ligand>
</feature>
<feature type="binding site" evidence="1">
    <location>
        <position position="12"/>
    </location>
    <ligand>
        <name>sn-glycerol 3-phosphate</name>
        <dbReference type="ChEBI" id="CHEBI:57597"/>
    </ligand>
</feature>
<feature type="binding site" evidence="1">
    <location>
        <position position="13"/>
    </location>
    <ligand>
        <name>ATP</name>
        <dbReference type="ChEBI" id="CHEBI:30616"/>
    </ligand>
</feature>
<feature type="binding site" evidence="1">
    <location>
        <position position="14"/>
    </location>
    <ligand>
        <name>ATP</name>
        <dbReference type="ChEBI" id="CHEBI:30616"/>
    </ligand>
</feature>
<feature type="binding site" evidence="1">
    <location>
        <position position="16"/>
    </location>
    <ligand>
        <name>ADP</name>
        <dbReference type="ChEBI" id="CHEBI:456216"/>
    </ligand>
</feature>
<feature type="binding site" evidence="1">
    <location>
        <position position="82"/>
    </location>
    <ligand>
        <name>glycerol</name>
        <dbReference type="ChEBI" id="CHEBI:17754"/>
    </ligand>
</feature>
<feature type="binding site" evidence="1">
    <location>
        <position position="82"/>
    </location>
    <ligand>
        <name>sn-glycerol 3-phosphate</name>
        <dbReference type="ChEBI" id="CHEBI:57597"/>
    </ligand>
</feature>
<feature type="binding site" evidence="1">
    <location>
        <position position="83"/>
    </location>
    <ligand>
        <name>glycerol</name>
        <dbReference type="ChEBI" id="CHEBI:17754"/>
    </ligand>
</feature>
<feature type="binding site" evidence="1">
    <location>
        <position position="83"/>
    </location>
    <ligand>
        <name>sn-glycerol 3-phosphate</name>
        <dbReference type="ChEBI" id="CHEBI:57597"/>
    </ligand>
</feature>
<feature type="binding site" evidence="1">
    <location>
        <position position="134"/>
    </location>
    <ligand>
        <name>glycerol</name>
        <dbReference type="ChEBI" id="CHEBI:17754"/>
    </ligand>
</feature>
<feature type="binding site" evidence="1">
    <location>
        <position position="134"/>
    </location>
    <ligand>
        <name>sn-glycerol 3-phosphate</name>
        <dbReference type="ChEBI" id="CHEBI:57597"/>
    </ligand>
</feature>
<feature type="binding site" evidence="1">
    <location>
        <position position="249"/>
    </location>
    <ligand>
        <name>glycerol</name>
        <dbReference type="ChEBI" id="CHEBI:17754"/>
    </ligand>
</feature>
<feature type="binding site" evidence="1">
    <location>
        <position position="249"/>
    </location>
    <ligand>
        <name>sn-glycerol 3-phosphate</name>
        <dbReference type="ChEBI" id="CHEBI:57597"/>
    </ligand>
</feature>
<feature type="binding site" evidence="1">
    <location>
        <position position="250"/>
    </location>
    <ligand>
        <name>glycerol</name>
        <dbReference type="ChEBI" id="CHEBI:17754"/>
    </ligand>
</feature>
<feature type="binding site" evidence="1">
    <location>
        <position position="271"/>
    </location>
    <ligand>
        <name>ADP</name>
        <dbReference type="ChEBI" id="CHEBI:456216"/>
    </ligand>
</feature>
<feature type="binding site" evidence="1">
    <location>
        <position position="271"/>
    </location>
    <ligand>
        <name>ATP</name>
        <dbReference type="ChEBI" id="CHEBI:30616"/>
    </ligand>
</feature>
<feature type="binding site" evidence="1">
    <location>
        <position position="315"/>
    </location>
    <ligand>
        <name>ADP</name>
        <dbReference type="ChEBI" id="CHEBI:456216"/>
    </ligand>
</feature>
<feature type="binding site" evidence="1">
    <location>
        <position position="315"/>
    </location>
    <ligand>
        <name>ATP</name>
        <dbReference type="ChEBI" id="CHEBI:30616"/>
    </ligand>
</feature>
<feature type="binding site" evidence="1">
    <location>
        <position position="319"/>
    </location>
    <ligand>
        <name>ATP</name>
        <dbReference type="ChEBI" id="CHEBI:30616"/>
    </ligand>
</feature>
<feature type="binding site" evidence="1">
    <location>
        <position position="416"/>
    </location>
    <ligand>
        <name>ADP</name>
        <dbReference type="ChEBI" id="CHEBI:456216"/>
    </ligand>
</feature>
<feature type="binding site" evidence="1">
    <location>
        <position position="416"/>
    </location>
    <ligand>
        <name>ATP</name>
        <dbReference type="ChEBI" id="CHEBI:30616"/>
    </ligand>
</feature>
<feature type="binding site" evidence="1">
    <location>
        <position position="420"/>
    </location>
    <ligand>
        <name>ADP</name>
        <dbReference type="ChEBI" id="CHEBI:456216"/>
    </ligand>
</feature>